<gene>
    <name evidence="4" type="primary">mtcu-2</name>
    <name evidence="4" type="ORF">F52H3.2</name>
</gene>
<sequence length="638" mass="71680">MLSKSTRLLRRCFQTDVDVIVIGGGHAGCESAAAAARCGSNTVLVTQNKNTIGEMSCNPSFGGIGKGHLIREVDALDGLCARICDKSAITYQALNRAQGPAVLGLRAQIDRKLYKTQMQNEINSTKRLEILEGEVAELLVENGKIVGIRMMNETVIRTKCVVITTGTFLRAQIYQGMKTWPAGRIGEKSSDRLSESFLKHGFELGRLRTGTPPRLMKDSINFSKFERVAPDRTPIPFSFLTKNVWISYEDQLPTYLGHTNDEVCRIGNENMHENYQVASETTSPRYCPSLESKLLRFPKLHHRLFLEHEGLDSPHIYPQGMSLTFKPEVQTQLLRAIPGLENVEIFQPGYGVQYDFVNPKQLKRTLETRKVEGMFLAGQINGTTGYEEAAAQGVVAGINASARAQNEPGMEVSRTEGYIGVLIDDLTSLGTNEPYRMLTSRAEFRLYLRPDNADIRLTELGRRHNAISDNRWAIFTETKGELNNLTQRTEEMKMSMVKWKRIIPKLAATSRNDGKVLSAFDLIHRYDLDKSDLELCLKDKNIGEDILERLKIEGRYQMEHERMKAKKQEIDRESATAIPDNTDFSTMRGMSLECIEKLERARPRNLAAATRISGITPEAIVVLMRHLKNPAPVRSSAV</sequence>
<keyword id="KW-0274">FAD</keyword>
<keyword id="KW-0285">Flavoprotein</keyword>
<keyword id="KW-1185">Reference proteome</keyword>
<dbReference type="EMBL" id="Z66512">
    <property type="protein sequence ID" value="CAA91322.1"/>
    <property type="molecule type" value="Genomic_DNA"/>
</dbReference>
<dbReference type="PIR" id="T22518">
    <property type="entry name" value="T22518"/>
</dbReference>
<dbReference type="RefSeq" id="NP_496169.1">
    <property type="nucleotide sequence ID" value="NM_063768.8"/>
</dbReference>
<dbReference type="SMR" id="Q20680"/>
<dbReference type="BioGRID" id="39883">
    <property type="interactions" value="1"/>
</dbReference>
<dbReference type="FunCoup" id="Q20680">
    <property type="interactions" value="2532"/>
</dbReference>
<dbReference type="STRING" id="6239.F52H3.2.1"/>
<dbReference type="PaxDb" id="6239-F52H3.2"/>
<dbReference type="PeptideAtlas" id="Q20680"/>
<dbReference type="EnsemblMetazoa" id="F52H3.2.1">
    <property type="protein sequence ID" value="F52H3.2.1"/>
    <property type="gene ID" value="WBGene00009944"/>
</dbReference>
<dbReference type="GeneID" id="174563"/>
<dbReference type="KEGG" id="cel:CELE_F52H3.2"/>
<dbReference type="UCSC" id="F52H3.2.1">
    <property type="organism name" value="c. elegans"/>
</dbReference>
<dbReference type="AGR" id="WB:WBGene00009944"/>
<dbReference type="CTD" id="174563"/>
<dbReference type="WormBase" id="F52H3.2">
    <property type="protein sequence ID" value="CE03398"/>
    <property type="gene ID" value="WBGene00009944"/>
    <property type="gene designation" value="mtcu-2"/>
</dbReference>
<dbReference type="eggNOG" id="KOG2311">
    <property type="taxonomic scope" value="Eukaryota"/>
</dbReference>
<dbReference type="GeneTree" id="ENSGT00390000011297"/>
<dbReference type="HOGENOM" id="CLU_007831_2_2_1"/>
<dbReference type="InParanoid" id="Q20680"/>
<dbReference type="OMA" id="CNPAMGG"/>
<dbReference type="OrthoDB" id="3329at2759"/>
<dbReference type="PhylomeDB" id="Q20680"/>
<dbReference type="PRO" id="PR:Q20680"/>
<dbReference type="Proteomes" id="UP000001940">
    <property type="component" value="Chromosome II"/>
</dbReference>
<dbReference type="Bgee" id="WBGene00009944">
    <property type="expression patterns" value="Expressed in germ line (C elegans) and 4 other cell types or tissues"/>
</dbReference>
<dbReference type="GO" id="GO:0005829">
    <property type="term" value="C:cytosol"/>
    <property type="evidence" value="ECO:0000318"/>
    <property type="project" value="GO_Central"/>
</dbReference>
<dbReference type="GO" id="GO:0005739">
    <property type="term" value="C:mitochondrion"/>
    <property type="evidence" value="ECO:0000318"/>
    <property type="project" value="GO_Central"/>
</dbReference>
<dbReference type="GO" id="GO:0050660">
    <property type="term" value="F:flavin adenine dinucleotide binding"/>
    <property type="evidence" value="ECO:0000318"/>
    <property type="project" value="GO_Central"/>
</dbReference>
<dbReference type="GO" id="GO:0070899">
    <property type="term" value="P:mitochondrial tRNA wobble uridine modification"/>
    <property type="evidence" value="ECO:0000318"/>
    <property type="project" value="GO_Central"/>
</dbReference>
<dbReference type="GO" id="GO:0030488">
    <property type="term" value="P:tRNA methylation"/>
    <property type="evidence" value="ECO:0000318"/>
    <property type="project" value="GO_Central"/>
</dbReference>
<dbReference type="FunFam" id="3.50.50.60:FF:000082">
    <property type="entry name" value="protein MTO1 homolog, mitochondrial isoform X1"/>
    <property type="match status" value="1"/>
</dbReference>
<dbReference type="FunFam" id="1.10.150.570:FF:000001">
    <property type="entry name" value="tRNA uridine 5-carboxymethylaminomethyl modification enzyme MnmG"/>
    <property type="match status" value="1"/>
</dbReference>
<dbReference type="FunFam" id="3.50.50.60:FF:000002">
    <property type="entry name" value="tRNA uridine 5-carboxymethylaminomethyl modification enzyme MnmG"/>
    <property type="match status" value="1"/>
</dbReference>
<dbReference type="Gene3D" id="3.50.50.60">
    <property type="entry name" value="FAD/NAD(P)-binding domain"/>
    <property type="match status" value="2"/>
</dbReference>
<dbReference type="Gene3D" id="1.10.150.570">
    <property type="entry name" value="GidA associated domain, C-terminal subdomain"/>
    <property type="match status" value="1"/>
</dbReference>
<dbReference type="InterPro" id="IPR036188">
    <property type="entry name" value="FAD/NAD-bd_sf"/>
</dbReference>
<dbReference type="InterPro" id="IPR049312">
    <property type="entry name" value="GIDA_C_N"/>
</dbReference>
<dbReference type="InterPro" id="IPR004416">
    <property type="entry name" value="MnmG"/>
</dbReference>
<dbReference type="InterPro" id="IPR002218">
    <property type="entry name" value="MnmG-rel"/>
</dbReference>
<dbReference type="InterPro" id="IPR020595">
    <property type="entry name" value="MnmG-rel_CS"/>
</dbReference>
<dbReference type="InterPro" id="IPR026904">
    <property type="entry name" value="MnmG_C"/>
</dbReference>
<dbReference type="InterPro" id="IPR047001">
    <property type="entry name" value="MnmG_C_subdom"/>
</dbReference>
<dbReference type="InterPro" id="IPR044920">
    <property type="entry name" value="MnmG_C_subdom_sf"/>
</dbReference>
<dbReference type="InterPro" id="IPR040131">
    <property type="entry name" value="MnmG_N"/>
</dbReference>
<dbReference type="NCBIfam" id="TIGR00136">
    <property type="entry name" value="mnmG_gidA"/>
    <property type="match status" value="1"/>
</dbReference>
<dbReference type="PANTHER" id="PTHR11806">
    <property type="entry name" value="GLUCOSE INHIBITED DIVISION PROTEIN A"/>
    <property type="match status" value="1"/>
</dbReference>
<dbReference type="PANTHER" id="PTHR11806:SF0">
    <property type="entry name" value="PROTEIN MTO1 HOMOLOG, MITOCHONDRIAL"/>
    <property type="match status" value="1"/>
</dbReference>
<dbReference type="Pfam" id="PF01134">
    <property type="entry name" value="GIDA"/>
    <property type="match status" value="1"/>
</dbReference>
<dbReference type="Pfam" id="PF21680">
    <property type="entry name" value="GIDA_C_1st"/>
    <property type="match status" value="1"/>
</dbReference>
<dbReference type="Pfam" id="PF13932">
    <property type="entry name" value="SAM_GIDA_C"/>
    <property type="match status" value="1"/>
</dbReference>
<dbReference type="PRINTS" id="PR00411">
    <property type="entry name" value="PNDRDTASEI"/>
</dbReference>
<dbReference type="SMART" id="SM01228">
    <property type="entry name" value="GIDA_assoc_3"/>
    <property type="match status" value="1"/>
</dbReference>
<dbReference type="SUPFAM" id="SSF51905">
    <property type="entry name" value="FAD/NAD(P)-binding domain"/>
    <property type="match status" value="1"/>
</dbReference>
<dbReference type="PROSITE" id="PS01280">
    <property type="entry name" value="GIDA_1"/>
    <property type="match status" value="1"/>
</dbReference>
<dbReference type="PROSITE" id="PS01281">
    <property type="entry name" value="GIDA_2"/>
    <property type="match status" value="1"/>
</dbReference>
<accession>Q20680</accession>
<feature type="chain" id="PRO_0000117286" description="Protein MTO1 homolog, mitochondrial" evidence="3">
    <location>
        <begin position="1"/>
        <end position="638"/>
    </location>
</feature>
<feature type="binding site" evidence="1">
    <location>
        <begin position="23"/>
        <end position="28"/>
    </location>
    <ligand>
        <name>FAD</name>
        <dbReference type="ChEBI" id="CHEBI:57692"/>
    </ligand>
</feature>
<protein>
    <recommendedName>
        <fullName evidence="2">Protein MTO1 homolog, mitochondrial</fullName>
    </recommendedName>
    <alternativeName>
        <fullName evidence="4">Mitochondrial tRNA carboxymethyl-amino-methyl modification of uridine residues protein 2</fullName>
    </alternativeName>
</protein>
<organism>
    <name type="scientific">Caenorhabditis elegans</name>
    <dbReference type="NCBI Taxonomy" id="6239"/>
    <lineage>
        <taxon>Eukaryota</taxon>
        <taxon>Metazoa</taxon>
        <taxon>Ecdysozoa</taxon>
        <taxon>Nematoda</taxon>
        <taxon>Chromadorea</taxon>
        <taxon>Rhabditida</taxon>
        <taxon>Rhabditina</taxon>
        <taxon>Rhabditomorpha</taxon>
        <taxon>Rhabditoidea</taxon>
        <taxon>Rhabditidae</taxon>
        <taxon>Peloderinae</taxon>
        <taxon>Caenorhabditis</taxon>
    </lineage>
</organism>
<comment type="function">
    <text evidence="2">Involved in the 5-carboxymethylaminomethyl modification (mnm(5)s(2)U34) of the wobble uridine base in mitochondrial tRNAs.</text>
</comment>
<comment type="cofactor">
    <cofactor evidence="1">
        <name>FAD</name>
        <dbReference type="ChEBI" id="CHEBI:57692"/>
    </cofactor>
</comment>
<comment type="similarity">
    <text evidence="3">Belongs to the MnmG family.</text>
</comment>
<proteinExistence type="inferred from homology"/>
<reference key="1">
    <citation type="journal article" date="1998" name="Science">
        <title>Genome sequence of the nematode C. elegans: a platform for investigating biology.</title>
        <authorList>
            <consortium name="The C. elegans sequencing consortium"/>
        </authorList>
    </citation>
    <scope>NUCLEOTIDE SEQUENCE [LARGE SCALE GENOMIC DNA]</scope>
    <source>
        <strain>Bristol N2</strain>
    </source>
</reference>
<evidence type="ECO:0000250" key="1"/>
<evidence type="ECO:0000250" key="2">
    <source>
        <dbReference type="UniProtKB" id="Q9Y2Z2"/>
    </source>
</evidence>
<evidence type="ECO:0000305" key="3"/>
<evidence type="ECO:0000312" key="4">
    <source>
        <dbReference type="WormBase" id="F52H3.2"/>
    </source>
</evidence>
<name>MTO1_CAEEL</name>